<proteinExistence type="inferred from homology"/>
<name>FABH_SINMW</name>
<feature type="chain" id="PRO_1000187893" description="Beta-ketoacyl-[acyl-carrier-protein] synthase III">
    <location>
        <begin position="1"/>
        <end position="323"/>
    </location>
</feature>
<feature type="region of interest" description="ACP-binding" evidence="1">
    <location>
        <begin position="251"/>
        <end position="255"/>
    </location>
</feature>
<feature type="active site" evidence="1">
    <location>
        <position position="113"/>
    </location>
</feature>
<feature type="active site" evidence="1">
    <location>
        <position position="250"/>
    </location>
</feature>
<feature type="active site" evidence="1">
    <location>
        <position position="280"/>
    </location>
</feature>
<reference key="1">
    <citation type="submission" date="2007-06" db="EMBL/GenBank/DDBJ databases">
        <title>Complete sequence of Sinorhizobium medicae WSM419 chromosome.</title>
        <authorList>
            <consortium name="US DOE Joint Genome Institute"/>
            <person name="Copeland A."/>
            <person name="Lucas S."/>
            <person name="Lapidus A."/>
            <person name="Barry K."/>
            <person name="Glavina del Rio T."/>
            <person name="Dalin E."/>
            <person name="Tice H."/>
            <person name="Pitluck S."/>
            <person name="Chain P."/>
            <person name="Malfatti S."/>
            <person name="Shin M."/>
            <person name="Vergez L."/>
            <person name="Schmutz J."/>
            <person name="Larimer F."/>
            <person name="Land M."/>
            <person name="Hauser L."/>
            <person name="Kyrpides N."/>
            <person name="Mikhailova N."/>
            <person name="Reeve W.G."/>
            <person name="Richardson P."/>
        </authorList>
    </citation>
    <scope>NUCLEOTIDE SEQUENCE [LARGE SCALE GENOMIC DNA]</scope>
    <source>
        <strain>WSM419</strain>
    </source>
</reference>
<sequence length="323" mass="34213">MIRSVVRGFGAALPKRVMTNKEMESKVDTSDEWIVQRTGIRQRYIAGDGETTASLGEAAARAALERAGLTPDDIDLIIVATSTPDNTFPATAVNIQNRLGMRHGAAFDMQAVCSGFVYAVTTGDAYIRGGLATRVLVIGAETFSRILDWTDRTTCVLFGDGAGAIVLEAQEGAGTKADRGVLTAQLRSDGAHGDKLYVDGGPSTTGTVGHLRMEGREVFKHAVGMITDVIEAAFEATGTTADDIDWLVPHQANRRIIEGSAKKLGIPLEKVVVTVDLHGNTSAASIPLALDAAATDGRIKRGDLVMLEAMGGGFTWGSVLLRW</sequence>
<organism>
    <name type="scientific">Sinorhizobium medicae (strain WSM419)</name>
    <name type="common">Ensifer medicae</name>
    <dbReference type="NCBI Taxonomy" id="366394"/>
    <lineage>
        <taxon>Bacteria</taxon>
        <taxon>Pseudomonadati</taxon>
        <taxon>Pseudomonadota</taxon>
        <taxon>Alphaproteobacteria</taxon>
        <taxon>Hyphomicrobiales</taxon>
        <taxon>Rhizobiaceae</taxon>
        <taxon>Sinorhizobium/Ensifer group</taxon>
        <taxon>Sinorhizobium</taxon>
    </lineage>
</organism>
<dbReference type="EC" id="2.3.1.180" evidence="1"/>
<dbReference type="EMBL" id="CP000738">
    <property type="protein sequence ID" value="ABR59685.1"/>
    <property type="molecule type" value="Genomic_DNA"/>
</dbReference>
<dbReference type="RefSeq" id="WP_011975025.1">
    <property type="nucleotide sequence ID" value="NC_009636.1"/>
</dbReference>
<dbReference type="RefSeq" id="YP_001326520.1">
    <property type="nucleotide sequence ID" value="NC_009636.1"/>
</dbReference>
<dbReference type="SMR" id="A6U7Q5"/>
<dbReference type="STRING" id="366394.Smed_0829"/>
<dbReference type="KEGG" id="smd:Smed_0829"/>
<dbReference type="PATRIC" id="fig|366394.8.peg.3943"/>
<dbReference type="eggNOG" id="COG0332">
    <property type="taxonomic scope" value="Bacteria"/>
</dbReference>
<dbReference type="HOGENOM" id="CLU_039592_3_1_5"/>
<dbReference type="OrthoDB" id="9815506at2"/>
<dbReference type="UniPathway" id="UPA00094"/>
<dbReference type="Proteomes" id="UP000001108">
    <property type="component" value="Chromosome"/>
</dbReference>
<dbReference type="GO" id="GO:0005737">
    <property type="term" value="C:cytoplasm"/>
    <property type="evidence" value="ECO:0007669"/>
    <property type="project" value="UniProtKB-SubCell"/>
</dbReference>
<dbReference type="GO" id="GO:0004315">
    <property type="term" value="F:3-oxoacyl-[acyl-carrier-protein] synthase activity"/>
    <property type="evidence" value="ECO:0007669"/>
    <property type="project" value="InterPro"/>
</dbReference>
<dbReference type="GO" id="GO:0033818">
    <property type="term" value="F:beta-ketoacyl-acyl-carrier-protein synthase III activity"/>
    <property type="evidence" value="ECO:0007669"/>
    <property type="project" value="UniProtKB-UniRule"/>
</dbReference>
<dbReference type="GO" id="GO:0006633">
    <property type="term" value="P:fatty acid biosynthetic process"/>
    <property type="evidence" value="ECO:0007669"/>
    <property type="project" value="UniProtKB-UniRule"/>
</dbReference>
<dbReference type="CDD" id="cd00830">
    <property type="entry name" value="KAS_III"/>
    <property type="match status" value="1"/>
</dbReference>
<dbReference type="FunFam" id="3.40.47.10:FF:000004">
    <property type="entry name" value="3-oxoacyl-[acyl-carrier-protein] synthase 3"/>
    <property type="match status" value="1"/>
</dbReference>
<dbReference type="Gene3D" id="3.40.47.10">
    <property type="match status" value="1"/>
</dbReference>
<dbReference type="HAMAP" id="MF_01815">
    <property type="entry name" value="FabH"/>
    <property type="match status" value="1"/>
</dbReference>
<dbReference type="InterPro" id="IPR013747">
    <property type="entry name" value="ACP_syn_III_C"/>
</dbReference>
<dbReference type="InterPro" id="IPR013751">
    <property type="entry name" value="ACP_syn_III_N"/>
</dbReference>
<dbReference type="InterPro" id="IPR004655">
    <property type="entry name" value="FabH"/>
</dbReference>
<dbReference type="InterPro" id="IPR016039">
    <property type="entry name" value="Thiolase-like"/>
</dbReference>
<dbReference type="NCBIfam" id="TIGR00747">
    <property type="entry name" value="fabH"/>
    <property type="match status" value="1"/>
</dbReference>
<dbReference type="NCBIfam" id="NF006829">
    <property type="entry name" value="PRK09352.1"/>
    <property type="match status" value="1"/>
</dbReference>
<dbReference type="PANTHER" id="PTHR43091">
    <property type="entry name" value="3-OXOACYL-[ACYL-CARRIER-PROTEIN] SYNTHASE"/>
    <property type="match status" value="1"/>
</dbReference>
<dbReference type="PANTHER" id="PTHR43091:SF1">
    <property type="entry name" value="BETA-KETOACYL-[ACYL-CARRIER-PROTEIN] SYNTHASE III, CHLOROPLASTIC"/>
    <property type="match status" value="1"/>
</dbReference>
<dbReference type="Pfam" id="PF08545">
    <property type="entry name" value="ACP_syn_III"/>
    <property type="match status" value="1"/>
</dbReference>
<dbReference type="Pfam" id="PF08541">
    <property type="entry name" value="ACP_syn_III_C"/>
    <property type="match status" value="1"/>
</dbReference>
<dbReference type="SUPFAM" id="SSF53901">
    <property type="entry name" value="Thiolase-like"/>
    <property type="match status" value="1"/>
</dbReference>
<gene>
    <name evidence="1" type="primary">fabH</name>
    <name type="ordered locus">Smed_0829</name>
</gene>
<keyword id="KW-0012">Acyltransferase</keyword>
<keyword id="KW-0963">Cytoplasm</keyword>
<keyword id="KW-0275">Fatty acid biosynthesis</keyword>
<keyword id="KW-0276">Fatty acid metabolism</keyword>
<keyword id="KW-0444">Lipid biosynthesis</keyword>
<keyword id="KW-0443">Lipid metabolism</keyword>
<keyword id="KW-0511">Multifunctional enzyme</keyword>
<keyword id="KW-0808">Transferase</keyword>
<comment type="function">
    <text evidence="1">Catalyzes the condensation reaction of fatty acid synthesis by the addition to an acyl acceptor of two carbons from malonyl-ACP. Catalyzes the first condensation reaction which initiates fatty acid synthesis and may therefore play a role in governing the total rate of fatty acid production. Possesses both acetoacetyl-ACP synthase and acetyl transacylase activities. Its substrate specificity determines the biosynthesis of branched-chain and/or straight-chain of fatty acids.</text>
</comment>
<comment type="catalytic activity">
    <reaction evidence="1">
        <text>malonyl-[ACP] + acetyl-CoA + H(+) = 3-oxobutanoyl-[ACP] + CO2 + CoA</text>
        <dbReference type="Rhea" id="RHEA:12080"/>
        <dbReference type="Rhea" id="RHEA-COMP:9623"/>
        <dbReference type="Rhea" id="RHEA-COMP:9625"/>
        <dbReference type="ChEBI" id="CHEBI:15378"/>
        <dbReference type="ChEBI" id="CHEBI:16526"/>
        <dbReference type="ChEBI" id="CHEBI:57287"/>
        <dbReference type="ChEBI" id="CHEBI:57288"/>
        <dbReference type="ChEBI" id="CHEBI:78449"/>
        <dbReference type="ChEBI" id="CHEBI:78450"/>
        <dbReference type="EC" id="2.3.1.180"/>
    </reaction>
</comment>
<comment type="pathway">
    <text evidence="1">Lipid metabolism; fatty acid biosynthesis.</text>
</comment>
<comment type="subunit">
    <text evidence="1">Homodimer.</text>
</comment>
<comment type="subcellular location">
    <subcellularLocation>
        <location evidence="1">Cytoplasm</location>
    </subcellularLocation>
</comment>
<comment type="domain">
    <text evidence="1">The last Arg residue of the ACP-binding site is essential for the weak association between ACP/AcpP and FabH.</text>
</comment>
<comment type="similarity">
    <text evidence="1">Belongs to the thiolase-like superfamily. FabH family.</text>
</comment>
<protein>
    <recommendedName>
        <fullName evidence="1">Beta-ketoacyl-[acyl-carrier-protein] synthase III</fullName>
        <shortName evidence="1">Beta-ketoacyl-ACP synthase III</shortName>
        <shortName evidence="1">KAS III</shortName>
        <ecNumber evidence="1">2.3.1.180</ecNumber>
    </recommendedName>
    <alternativeName>
        <fullName evidence="1">3-oxoacyl-[acyl-carrier-protein] synthase 3</fullName>
    </alternativeName>
    <alternativeName>
        <fullName evidence="1">3-oxoacyl-[acyl-carrier-protein] synthase III</fullName>
    </alternativeName>
</protein>
<accession>A6U7Q5</accession>
<evidence type="ECO:0000255" key="1">
    <source>
        <dbReference type="HAMAP-Rule" id="MF_01815"/>
    </source>
</evidence>